<sequence>MSKICIIAWIYGRVQGVGFRYTTQYEAKRLGLTGYAKNLDDGSVEVVACGEEGQVEKLMQWLKSGGPRSARVERVLSEPHHPSGELTDFRIR</sequence>
<feature type="chain" id="PRO_0000326802" description="Acylphosphatase">
    <location>
        <begin position="1"/>
        <end position="92"/>
    </location>
</feature>
<feature type="domain" description="Acylphosphatase-like" evidence="1">
    <location>
        <begin position="5"/>
        <end position="92"/>
    </location>
</feature>
<feature type="active site" evidence="1">
    <location>
        <position position="20"/>
    </location>
</feature>
<feature type="active site" evidence="1">
    <location>
        <position position="38"/>
    </location>
</feature>
<feature type="disulfide bond" evidence="1">
    <location>
        <begin position="5"/>
        <end position="49"/>
    </location>
</feature>
<gene>
    <name evidence="1" type="primary">yccX</name>
    <name type="ordered locus">SF0969</name>
    <name type="ordered locus">S1036</name>
</gene>
<reference key="1">
    <citation type="journal article" date="2002" name="Nucleic Acids Res.">
        <title>Genome sequence of Shigella flexneri 2a: insights into pathogenicity through comparison with genomes of Escherichia coli K12 and O157.</title>
        <authorList>
            <person name="Jin Q."/>
            <person name="Yuan Z."/>
            <person name="Xu J."/>
            <person name="Wang Y."/>
            <person name="Shen Y."/>
            <person name="Lu W."/>
            <person name="Wang J."/>
            <person name="Liu H."/>
            <person name="Yang J."/>
            <person name="Yang F."/>
            <person name="Zhang X."/>
            <person name="Zhang J."/>
            <person name="Yang G."/>
            <person name="Wu H."/>
            <person name="Qu D."/>
            <person name="Dong J."/>
            <person name="Sun L."/>
            <person name="Xue Y."/>
            <person name="Zhao A."/>
            <person name="Gao Y."/>
            <person name="Zhu J."/>
            <person name="Kan B."/>
            <person name="Ding K."/>
            <person name="Chen S."/>
            <person name="Cheng H."/>
            <person name="Yao Z."/>
            <person name="He B."/>
            <person name="Chen R."/>
            <person name="Ma D."/>
            <person name="Qiang B."/>
            <person name="Wen Y."/>
            <person name="Hou Y."/>
            <person name="Yu J."/>
        </authorList>
    </citation>
    <scope>NUCLEOTIDE SEQUENCE [LARGE SCALE GENOMIC DNA]</scope>
    <source>
        <strain>301 / Serotype 2a</strain>
    </source>
</reference>
<reference key="2">
    <citation type="journal article" date="2003" name="Infect. Immun.">
        <title>Complete genome sequence and comparative genomics of Shigella flexneri serotype 2a strain 2457T.</title>
        <authorList>
            <person name="Wei J."/>
            <person name="Goldberg M.B."/>
            <person name="Burland V."/>
            <person name="Venkatesan M.M."/>
            <person name="Deng W."/>
            <person name="Fournier G."/>
            <person name="Mayhew G.F."/>
            <person name="Plunkett G. III"/>
            <person name="Rose D.J."/>
            <person name="Darling A."/>
            <person name="Mau B."/>
            <person name="Perna N.T."/>
            <person name="Payne S.M."/>
            <person name="Runyen-Janecky L.J."/>
            <person name="Zhou S."/>
            <person name="Schwartz D.C."/>
            <person name="Blattner F.R."/>
        </authorList>
    </citation>
    <scope>NUCLEOTIDE SEQUENCE [LARGE SCALE GENOMIC DNA]</scope>
    <source>
        <strain>ATCC 700930 / 2457T / Serotype 2a</strain>
    </source>
</reference>
<name>ACYP_SHIFL</name>
<evidence type="ECO:0000255" key="1">
    <source>
        <dbReference type="HAMAP-Rule" id="MF_01450"/>
    </source>
</evidence>
<protein>
    <recommendedName>
        <fullName evidence="1">Acylphosphatase</fullName>
        <ecNumber evidence="1">3.6.1.7</ecNumber>
    </recommendedName>
    <alternativeName>
        <fullName evidence="1">Acylphosphate phosphohydrolase</fullName>
    </alternativeName>
</protein>
<organism>
    <name type="scientific">Shigella flexneri</name>
    <dbReference type="NCBI Taxonomy" id="623"/>
    <lineage>
        <taxon>Bacteria</taxon>
        <taxon>Pseudomonadati</taxon>
        <taxon>Pseudomonadota</taxon>
        <taxon>Gammaproteobacteria</taxon>
        <taxon>Enterobacterales</taxon>
        <taxon>Enterobacteriaceae</taxon>
        <taxon>Shigella</taxon>
    </lineage>
</organism>
<dbReference type="EC" id="3.6.1.7" evidence="1"/>
<dbReference type="EMBL" id="AE005674">
    <property type="protein sequence ID" value="AAN42598.2"/>
    <property type="molecule type" value="Genomic_DNA"/>
</dbReference>
<dbReference type="EMBL" id="AE014073">
    <property type="protein sequence ID" value="AAP16484.1"/>
    <property type="molecule type" value="Genomic_DNA"/>
</dbReference>
<dbReference type="RefSeq" id="NP_706891.2">
    <property type="nucleotide sequence ID" value="NC_004337.2"/>
</dbReference>
<dbReference type="RefSeq" id="WP_000034173.1">
    <property type="nucleotide sequence ID" value="NZ_WPGW01000043.1"/>
</dbReference>
<dbReference type="BMRB" id="Q83LL9"/>
<dbReference type="SMR" id="Q83LL9"/>
<dbReference type="STRING" id="198214.SF0969"/>
<dbReference type="PaxDb" id="198214-SF0969"/>
<dbReference type="GeneID" id="1023958"/>
<dbReference type="KEGG" id="sfl:SF0969"/>
<dbReference type="KEGG" id="sfx:S1036"/>
<dbReference type="PATRIC" id="fig|198214.7.peg.1129"/>
<dbReference type="HOGENOM" id="CLU_141932_1_2_6"/>
<dbReference type="Proteomes" id="UP000001006">
    <property type="component" value="Chromosome"/>
</dbReference>
<dbReference type="Proteomes" id="UP000002673">
    <property type="component" value="Chromosome"/>
</dbReference>
<dbReference type="GO" id="GO:0003998">
    <property type="term" value="F:acylphosphatase activity"/>
    <property type="evidence" value="ECO:0007669"/>
    <property type="project" value="UniProtKB-UniRule"/>
</dbReference>
<dbReference type="FunFam" id="3.30.70.100:FF:000012">
    <property type="entry name" value="Acylphosphatase"/>
    <property type="match status" value="1"/>
</dbReference>
<dbReference type="Gene3D" id="3.30.70.100">
    <property type="match status" value="1"/>
</dbReference>
<dbReference type="HAMAP" id="MF_01450">
    <property type="entry name" value="Acylphosphatase_entero"/>
    <property type="match status" value="1"/>
</dbReference>
<dbReference type="InterPro" id="IPR020456">
    <property type="entry name" value="Acylphosphatase"/>
</dbReference>
<dbReference type="InterPro" id="IPR001792">
    <property type="entry name" value="Acylphosphatase-like_dom"/>
</dbReference>
<dbReference type="InterPro" id="IPR036046">
    <property type="entry name" value="Acylphosphatase-like_dom_sf"/>
</dbReference>
<dbReference type="InterPro" id="IPR028627">
    <property type="entry name" value="Acylphosphatase_bac"/>
</dbReference>
<dbReference type="InterPro" id="IPR017968">
    <property type="entry name" value="Acylphosphatase_CS"/>
</dbReference>
<dbReference type="NCBIfam" id="NF011000">
    <property type="entry name" value="PRK14426.1"/>
    <property type="match status" value="1"/>
</dbReference>
<dbReference type="PANTHER" id="PTHR47268">
    <property type="entry name" value="ACYLPHOSPHATASE"/>
    <property type="match status" value="1"/>
</dbReference>
<dbReference type="PANTHER" id="PTHR47268:SF4">
    <property type="entry name" value="ACYLPHOSPHATASE"/>
    <property type="match status" value="1"/>
</dbReference>
<dbReference type="Pfam" id="PF00708">
    <property type="entry name" value="Acylphosphatase"/>
    <property type="match status" value="1"/>
</dbReference>
<dbReference type="PRINTS" id="PR00112">
    <property type="entry name" value="ACYLPHPHTASE"/>
</dbReference>
<dbReference type="SUPFAM" id="SSF54975">
    <property type="entry name" value="Acylphosphatase/BLUF domain-like"/>
    <property type="match status" value="1"/>
</dbReference>
<dbReference type="PROSITE" id="PS00150">
    <property type="entry name" value="ACYLPHOSPHATASE_1"/>
    <property type="match status" value="1"/>
</dbReference>
<dbReference type="PROSITE" id="PS00151">
    <property type="entry name" value="ACYLPHOSPHATASE_2"/>
    <property type="match status" value="1"/>
</dbReference>
<dbReference type="PROSITE" id="PS51160">
    <property type="entry name" value="ACYLPHOSPHATASE_3"/>
    <property type="match status" value="1"/>
</dbReference>
<comment type="catalytic activity">
    <reaction evidence="1">
        <text>an acyl phosphate + H2O = a carboxylate + phosphate + H(+)</text>
        <dbReference type="Rhea" id="RHEA:14965"/>
        <dbReference type="ChEBI" id="CHEBI:15377"/>
        <dbReference type="ChEBI" id="CHEBI:15378"/>
        <dbReference type="ChEBI" id="CHEBI:29067"/>
        <dbReference type="ChEBI" id="CHEBI:43474"/>
        <dbReference type="ChEBI" id="CHEBI:59918"/>
        <dbReference type="EC" id="3.6.1.7"/>
    </reaction>
</comment>
<comment type="similarity">
    <text evidence="1">Belongs to the acylphosphatase family.</text>
</comment>
<keyword id="KW-1015">Disulfide bond</keyword>
<keyword id="KW-0378">Hydrolase</keyword>
<keyword id="KW-1185">Reference proteome</keyword>
<accession>Q83LL9</accession>
<accession>Q7UD11</accession>
<proteinExistence type="inferred from homology"/>